<dbReference type="EC" id="6.3.5.7" evidence="1"/>
<dbReference type="EMBL" id="FN430326">
    <property type="protein sequence ID" value="CAZ84314.1"/>
    <property type="molecule type" value="Genomic_DNA"/>
</dbReference>
<dbReference type="RefSeq" id="XP_002840123.1">
    <property type="nucleotide sequence ID" value="XM_002840077.1"/>
</dbReference>
<dbReference type="SMR" id="D5GIH1"/>
<dbReference type="FunCoup" id="D5GIH1">
    <property type="interactions" value="318"/>
</dbReference>
<dbReference type="STRING" id="656061.D5GIH1"/>
<dbReference type="EnsemblFungi" id="CAZ84314">
    <property type="protein sequence ID" value="CAZ84314"/>
    <property type="gene ID" value="GSTUM_00008496001"/>
</dbReference>
<dbReference type="GeneID" id="9184672"/>
<dbReference type="KEGG" id="tml:GSTUM_00008496001"/>
<dbReference type="eggNOG" id="KOG1211">
    <property type="taxonomic scope" value="Eukaryota"/>
</dbReference>
<dbReference type="HOGENOM" id="CLU_009600_7_6_1"/>
<dbReference type="InParanoid" id="D5GIH1"/>
<dbReference type="OMA" id="QPASYCG"/>
<dbReference type="Proteomes" id="UP000006911">
    <property type="component" value="Unassembled WGS sequence"/>
</dbReference>
<dbReference type="GO" id="GO:0030956">
    <property type="term" value="C:glutamyl-tRNA(Gln) amidotransferase complex"/>
    <property type="evidence" value="ECO:0007669"/>
    <property type="project" value="UniProtKB-UniRule"/>
</dbReference>
<dbReference type="GO" id="GO:0005739">
    <property type="term" value="C:mitochondrion"/>
    <property type="evidence" value="ECO:0007669"/>
    <property type="project" value="UniProtKB-SubCell"/>
</dbReference>
<dbReference type="GO" id="GO:0005524">
    <property type="term" value="F:ATP binding"/>
    <property type="evidence" value="ECO:0007669"/>
    <property type="project" value="UniProtKB-KW"/>
</dbReference>
<dbReference type="GO" id="GO:0050567">
    <property type="term" value="F:glutaminyl-tRNA synthase (glutamine-hydrolyzing) activity"/>
    <property type="evidence" value="ECO:0007669"/>
    <property type="project" value="UniProtKB-UniRule"/>
</dbReference>
<dbReference type="GO" id="GO:0070681">
    <property type="term" value="P:glutaminyl-tRNAGln biosynthesis via transamidation"/>
    <property type="evidence" value="ECO:0007669"/>
    <property type="project" value="UniProtKB-UniRule"/>
</dbReference>
<dbReference type="GO" id="GO:0032543">
    <property type="term" value="P:mitochondrial translation"/>
    <property type="evidence" value="ECO:0007669"/>
    <property type="project" value="UniProtKB-UniRule"/>
</dbReference>
<dbReference type="Gene3D" id="3.90.1300.10">
    <property type="entry name" value="Amidase signature (AS) domain"/>
    <property type="match status" value="1"/>
</dbReference>
<dbReference type="HAMAP" id="MF_00120">
    <property type="entry name" value="GatA"/>
    <property type="match status" value="1"/>
</dbReference>
<dbReference type="InterPro" id="IPR000120">
    <property type="entry name" value="Amidase"/>
</dbReference>
<dbReference type="InterPro" id="IPR020556">
    <property type="entry name" value="Amidase_CS"/>
</dbReference>
<dbReference type="InterPro" id="IPR023631">
    <property type="entry name" value="Amidase_dom"/>
</dbReference>
<dbReference type="InterPro" id="IPR036928">
    <property type="entry name" value="AS_sf"/>
</dbReference>
<dbReference type="InterPro" id="IPR004412">
    <property type="entry name" value="GatA"/>
</dbReference>
<dbReference type="PANTHER" id="PTHR11895:SF7">
    <property type="entry name" value="GLUTAMYL-TRNA(GLN) AMIDOTRANSFERASE SUBUNIT A, MITOCHONDRIAL"/>
    <property type="match status" value="1"/>
</dbReference>
<dbReference type="PANTHER" id="PTHR11895">
    <property type="entry name" value="TRANSAMIDASE"/>
    <property type="match status" value="1"/>
</dbReference>
<dbReference type="Pfam" id="PF01425">
    <property type="entry name" value="Amidase"/>
    <property type="match status" value="1"/>
</dbReference>
<dbReference type="SUPFAM" id="SSF75304">
    <property type="entry name" value="Amidase signature (AS) enzymes"/>
    <property type="match status" value="1"/>
</dbReference>
<dbReference type="PROSITE" id="PS00571">
    <property type="entry name" value="AMIDASES"/>
    <property type="match status" value="1"/>
</dbReference>
<proteinExistence type="inferred from homology"/>
<sequence>MALLEIAKKSLLAAEKYLALNSLISVQSQPELLSQVQASQERISADSGESKSSIDGQLIAVKDNICTTDFPTTCASKLLEQYVSPFDATVVRKAKEAGAVIMGKTNMDEFGMGSHSMYSHFGPVMQSAEDGRPARSAGGSSGGSAVAVATGMCYAALGTDTGGSVRLPAAYCGIVGFKPSYGMLSRWGVVAYANSLDTLYDAINGHDDNDPTSITPQTRERIQDRLSRSRRRGQRLAIGYPEEFNLVELDDPVRDAWENTLAHLNSQSHRIAPVSLPHTKHALSAYYVLAPAEASSNLAKYDGVRYGYRDPADRSQDGLLFSPTRANFGAEVRRRIIAGAYSLSSEAIDNYFLKAQSARRIIQRDFSNAFAQPNYLITDNLEEGRGKEGVDVLIAPCSLSKAPFLEDVKMQKSALDSYVNDVLTVPASLAGIPAICLPVMHGENDPVGIQVMAQYGDEETMWEVAKIIEEGLGSGVGSKTQPTNPTVN</sequence>
<accession>D5GIH1</accession>
<feature type="chain" id="PRO_0000413358" description="Glutamyl-tRNA(Gln) amidotransferase subunit A, mitochondrial">
    <location>
        <begin position="1"/>
        <end position="488"/>
    </location>
</feature>
<feature type="region of interest" description="Disordered" evidence="2">
    <location>
        <begin position="205"/>
        <end position="228"/>
    </location>
</feature>
<feature type="compositionally biased region" description="Basic and acidic residues" evidence="2">
    <location>
        <begin position="218"/>
        <end position="227"/>
    </location>
</feature>
<feature type="active site" description="Charge relay system" evidence="1">
    <location>
        <position position="62"/>
    </location>
</feature>
<feature type="active site" description="Charge relay system" evidence="1">
    <location>
        <position position="140"/>
    </location>
</feature>
<feature type="active site" description="Acyl-ester intermediate" evidence="1">
    <location>
        <position position="164"/>
    </location>
</feature>
<reference key="1">
    <citation type="journal article" date="2010" name="Nature">
        <title>Perigord black truffle genome uncovers evolutionary origins and mechanisms of symbiosis.</title>
        <authorList>
            <person name="Martin F."/>
            <person name="Kohler A."/>
            <person name="Murat C."/>
            <person name="Balestrini R."/>
            <person name="Coutinho P.M."/>
            <person name="Jaillon O."/>
            <person name="Montanini B."/>
            <person name="Morin E."/>
            <person name="Noel B."/>
            <person name="Percudani R."/>
            <person name="Porcel B."/>
            <person name="Rubini A."/>
            <person name="Amicucci A."/>
            <person name="Amselem J."/>
            <person name="Anthouard V."/>
            <person name="Arcioni S."/>
            <person name="Artiguenave F."/>
            <person name="Aury J.M."/>
            <person name="Ballario P."/>
            <person name="Bolchi A."/>
            <person name="Brenna A."/>
            <person name="Brun A."/>
            <person name="Buee M."/>
            <person name="Cantarel B."/>
            <person name="Chevalier G."/>
            <person name="Couloux A."/>
            <person name="Da Silva C."/>
            <person name="Denoeud F."/>
            <person name="Duplessis S."/>
            <person name="Ghignone S."/>
            <person name="Hilselberger B."/>
            <person name="Iotti M."/>
            <person name="Marcais B."/>
            <person name="Mello A."/>
            <person name="Miranda M."/>
            <person name="Pacioni G."/>
            <person name="Quesneville H."/>
            <person name="Riccioni C."/>
            <person name="Ruotolo R."/>
            <person name="Splivallo R."/>
            <person name="Stocchi V."/>
            <person name="Tisserant E."/>
            <person name="Viscomi A.R."/>
            <person name="Zambonelli A."/>
            <person name="Zampieri E."/>
            <person name="Henrissat B."/>
            <person name="Lebrun M.H."/>
            <person name="Paolocci F."/>
            <person name="Bonfante P."/>
            <person name="Ottonello S."/>
            <person name="Wincker P."/>
        </authorList>
    </citation>
    <scope>NUCLEOTIDE SEQUENCE [LARGE SCALE GENOMIC DNA]</scope>
    <source>
        <strain>Mel28</strain>
    </source>
</reference>
<comment type="function">
    <text evidence="1">Allows the formation of correctly charged Gln-tRNA(Gln) through the transamidation of misacylated Glu-tRNA(Gln) in the mitochondria. The reaction takes place in the presence of glutamine and ATP through an activated gamma-phospho-Glu-tRNA(Gln).</text>
</comment>
<comment type="catalytic activity">
    <reaction evidence="1">
        <text>L-glutamyl-tRNA(Gln) + L-glutamine + ATP + H2O = L-glutaminyl-tRNA(Gln) + L-glutamate + ADP + phosphate + H(+)</text>
        <dbReference type="Rhea" id="RHEA:17521"/>
        <dbReference type="Rhea" id="RHEA-COMP:9681"/>
        <dbReference type="Rhea" id="RHEA-COMP:9684"/>
        <dbReference type="ChEBI" id="CHEBI:15377"/>
        <dbReference type="ChEBI" id="CHEBI:15378"/>
        <dbReference type="ChEBI" id="CHEBI:29985"/>
        <dbReference type="ChEBI" id="CHEBI:30616"/>
        <dbReference type="ChEBI" id="CHEBI:43474"/>
        <dbReference type="ChEBI" id="CHEBI:58359"/>
        <dbReference type="ChEBI" id="CHEBI:78520"/>
        <dbReference type="ChEBI" id="CHEBI:78521"/>
        <dbReference type="ChEBI" id="CHEBI:456216"/>
        <dbReference type="EC" id="6.3.5.7"/>
    </reaction>
</comment>
<comment type="subunit">
    <text evidence="1">Subunit of the heterotrimeric GatCAB amidotransferase (AdT) complex, composed of A, B and C subunits.</text>
</comment>
<comment type="subcellular location">
    <subcellularLocation>
        <location evidence="1">Mitochondrion</location>
    </subcellularLocation>
</comment>
<comment type="similarity">
    <text evidence="1">Belongs to the amidase family. GatA subfamily.</text>
</comment>
<evidence type="ECO:0000255" key="1">
    <source>
        <dbReference type="HAMAP-Rule" id="MF_03150"/>
    </source>
</evidence>
<evidence type="ECO:0000256" key="2">
    <source>
        <dbReference type="SAM" id="MobiDB-lite"/>
    </source>
</evidence>
<gene>
    <name type="ORF">GSTUM_00008496001</name>
</gene>
<keyword id="KW-0067">ATP-binding</keyword>
<keyword id="KW-0436">Ligase</keyword>
<keyword id="KW-0496">Mitochondrion</keyword>
<keyword id="KW-0547">Nucleotide-binding</keyword>
<keyword id="KW-0648">Protein biosynthesis</keyword>
<keyword id="KW-1185">Reference proteome</keyword>
<organism>
    <name type="scientific">Tuber melanosporum (strain Mel28)</name>
    <name type="common">Perigord black truffle</name>
    <dbReference type="NCBI Taxonomy" id="656061"/>
    <lineage>
        <taxon>Eukaryota</taxon>
        <taxon>Fungi</taxon>
        <taxon>Dikarya</taxon>
        <taxon>Ascomycota</taxon>
        <taxon>Pezizomycotina</taxon>
        <taxon>Pezizomycetes</taxon>
        <taxon>Pezizales</taxon>
        <taxon>Tuberaceae</taxon>
        <taxon>Tuber</taxon>
    </lineage>
</organism>
<protein>
    <recommendedName>
        <fullName evidence="1">Glutamyl-tRNA(Gln) amidotransferase subunit A, mitochondrial</fullName>
        <shortName evidence="1">Glu-AdT subunit A</shortName>
        <ecNumber evidence="1">6.3.5.7</ecNumber>
    </recommendedName>
</protein>
<name>GATA_TUBMM</name>